<evidence type="ECO:0000255" key="1">
    <source>
        <dbReference type="HAMAP-Rule" id="MF_01444"/>
    </source>
</evidence>
<feature type="chain" id="PRO_1000200986" description="Putative phosphoesterase BcerKBAB4_1135">
    <location>
        <begin position="1"/>
        <end position="172"/>
    </location>
</feature>
<feature type="short sequence motif" description="HXTX 1" evidence="1">
    <location>
        <begin position="34"/>
        <end position="37"/>
    </location>
</feature>
<feature type="short sequence motif" description="HXTX 2" evidence="1">
    <location>
        <begin position="115"/>
        <end position="118"/>
    </location>
</feature>
<feature type="active site" description="Proton donor" evidence="1">
    <location>
        <position position="34"/>
    </location>
</feature>
<feature type="active site" description="Proton acceptor" evidence="1">
    <location>
        <position position="115"/>
    </location>
</feature>
<accession>A9VJU8</accession>
<gene>
    <name type="ordered locus">BcerKBAB4_1135</name>
</gene>
<name>Y1135_BACMK</name>
<dbReference type="EC" id="3.1.-.-" evidence="1"/>
<dbReference type="EMBL" id="CP000903">
    <property type="protein sequence ID" value="ABY42384.1"/>
    <property type="molecule type" value="Genomic_DNA"/>
</dbReference>
<dbReference type="RefSeq" id="WP_002011397.1">
    <property type="nucleotide sequence ID" value="NC_010184.1"/>
</dbReference>
<dbReference type="SMR" id="A9VJU8"/>
<dbReference type="KEGG" id="bwe:BcerKBAB4_1135"/>
<dbReference type="eggNOG" id="COG1514">
    <property type="taxonomic scope" value="Bacteria"/>
</dbReference>
<dbReference type="HOGENOM" id="CLU_132020_0_0_9"/>
<dbReference type="Proteomes" id="UP000002154">
    <property type="component" value="Chromosome"/>
</dbReference>
<dbReference type="GO" id="GO:0016788">
    <property type="term" value="F:hydrolase activity, acting on ester bonds"/>
    <property type="evidence" value="ECO:0007669"/>
    <property type="project" value="UniProtKB-UniRule"/>
</dbReference>
<dbReference type="Gene3D" id="3.90.1140.10">
    <property type="entry name" value="Cyclic phosphodiesterase"/>
    <property type="match status" value="1"/>
</dbReference>
<dbReference type="HAMAP" id="MF_01444">
    <property type="entry name" value="2H_phosphoesterase_YjcG"/>
    <property type="match status" value="1"/>
</dbReference>
<dbReference type="InterPro" id="IPR050580">
    <property type="entry name" value="2H_phosphoesterase_YjcG-like"/>
</dbReference>
<dbReference type="InterPro" id="IPR009097">
    <property type="entry name" value="Cyclic_Pdiesterase"/>
</dbReference>
<dbReference type="InterPro" id="IPR022932">
    <property type="entry name" value="YjcG"/>
</dbReference>
<dbReference type="NCBIfam" id="NF010223">
    <property type="entry name" value="PRK13679.1"/>
    <property type="match status" value="1"/>
</dbReference>
<dbReference type="PANTHER" id="PTHR40037:SF1">
    <property type="entry name" value="PHOSPHOESTERASE SAOUHSC_00951-RELATED"/>
    <property type="match status" value="1"/>
</dbReference>
<dbReference type="PANTHER" id="PTHR40037">
    <property type="entry name" value="PHOSPHOESTERASE YJCG-RELATED"/>
    <property type="match status" value="1"/>
</dbReference>
<dbReference type="Pfam" id="PF13563">
    <property type="entry name" value="2_5_RNA_ligase2"/>
    <property type="match status" value="1"/>
</dbReference>
<dbReference type="SUPFAM" id="SSF55144">
    <property type="entry name" value="LigT-like"/>
    <property type="match status" value="1"/>
</dbReference>
<comment type="similarity">
    <text evidence="1">Belongs to the 2H phosphoesterase superfamily. YjcG family.</text>
</comment>
<keyword id="KW-0378">Hydrolase</keyword>
<protein>
    <recommendedName>
        <fullName evidence="1">Putative phosphoesterase BcerKBAB4_1135</fullName>
        <ecNumber evidence="1">3.1.-.-</ecNumber>
    </recommendedName>
</protein>
<reference key="1">
    <citation type="journal article" date="2008" name="Chem. Biol. Interact.">
        <title>Extending the Bacillus cereus group genomics to putative food-borne pathogens of different toxicity.</title>
        <authorList>
            <person name="Lapidus A."/>
            <person name="Goltsman E."/>
            <person name="Auger S."/>
            <person name="Galleron N."/>
            <person name="Segurens B."/>
            <person name="Dossat C."/>
            <person name="Land M.L."/>
            <person name="Broussolle V."/>
            <person name="Brillard J."/>
            <person name="Guinebretiere M.-H."/>
            <person name="Sanchis V."/>
            <person name="Nguen-the C."/>
            <person name="Lereclus D."/>
            <person name="Richardson P."/>
            <person name="Wincker P."/>
            <person name="Weissenbach J."/>
            <person name="Ehrlich S.D."/>
            <person name="Sorokin A."/>
        </authorList>
    </citation>
    <scope>NUCLEOTIDE SEQUENCE [LARGE SCALE GENOMIC DNA]</scope>
    <source>
        <strain>KBAB4</strain>
    </source>
</reference>
<proteinExistence type="inferred from homology"/>
<sequence>MKLGIVIFPSKMIQDKANGLRKRYDPHYALVPPHITLKTPFETQDEQLESIVNELHTIANKTNPFTLHVGKVGSFAPVNNVLYFKVEKTPELTFLNEEMHNGFFTQEREYSFVPHLTIGQDLSDAEHADVLGRLRMKDFYYEQPIDRFHLLYQLENGTWTVHETFHLGKENN</sequence>
<organism>
    <name type="scientific">Bacillus mycoides (strain KBAB4)</name>
    <name type="common">Bacillus weihenstephanensis</name>
    <dbReference type="NCBI Taxonomy" id="315730"/>
    <lineage>
        <taxon>Bacteria</taxon>
        <taxon>Bacillati</taxon>
        <taxon>Bacillota</taxon>
        <taxon>Bacilli</taxon>
        <taxon>Bacillales</taxon>
        <taxon>Bacillaceae</taxon>
        <taxon>Bacillus</taxon>
        <taxon>Bacillus cereus group</taxon>
    </lineage>
</organism>